<comment type="function">
    <text evidence="1">Involved in the catabolism of L-rhamnose (6-deoxy-L-mannose). Catalyzes the transfer of the gamma-phosphate group from ATP to the 1-hydroxyl group of L-rhamnulose to yield L-rhamnulose 1-phosphate.</text>
</comment>
<comment type="catalytic activity">
    <reaction evidence="1">
        <text>L-rhamnulose + ATP = L-rhamnulose 1-phosphate + ADP + H(+)</text>
        <dbReference type="Rhea" id="RHEA:20117"/>
        <dbReference type="ChEBI" id="CHEBI:15378"/>
        <dbReference type="ChEBI" id="CHEBI:17897"/>
        <dbReference type="ChEBI" id="CHEBI:30616"/>
        <dbReference type="ChEBI" id="CHEBI:58313"/>
        <dbReference type="ChEBI" id="CHEBI:456216"/>
        <dbReference type="EC" id="2.7.1.5"/>
    </reaction>
</comment>
<comment type="cofactor">
    <cofactor evidence="1">
        <name>Mg(2+)</name>
        <dbReference type="ChEBI" id="CHEBI:18420"/>
    </cofactor>
</comment>
<comment type="pathway">
    <text evidence="1">Carbohydrate degradation; L-rhamnose degradation; glycerone phosphate from L-rhamnose: step 2/3.</text>
</comment>
<comment type="similarity">
    <text evidence="1">Belongs to the rhamnulokinase family.</text>
</comment>
<organism>
    <name type="scientific">Yersinia pestis</name>
    <dbReference type="NCBI Taxonomy" id="632"/>
    <lineage>
        <taxon>Bacteria</taxon>
        <taxon>Pseudomonadati</taxon>
        <taxon>Pseudomonadota</taxon>
        <taxon>Gammaproteobacteria</taxon>
        <taxon>Enterobacterales</taxon>
        <taxon>Yersiniaceae</taxon>
        <taxon>Yersinia</taxon>
    </lineage>
</organism>
<keyword id="KW-0067">ATP-binding</keyword>
<keyword id="KW-1015">Disulfide bond</keyword>
<keyword id="KW-0418">Kinase</keyword>
<keyword id="KW-0547">Nucleotide-binding</keyword>
<keyword id="KW-1185">Reference proteome</keyword>
<keyword id="KW-0684">Rhamnose metabolism</keyword>
<keyword id="KW-0808">Transferase</keyword>
<evidence type="ECO:0000255" key="1">
    <source>
        <dbReference type="HAMAP-Rule" id="MF_01535"/>
    </source>
</evidence>
<protein>
    <recommendedName>
        <fullName evidence="1">Rhamnulokinase</fullName>
        <shortName evidence="1">RhaB</shortName>
        <ecNumber evidence="1">2.7.1.5</ecNumber>
    </recommendedName>
    <alternativeName>
        <fullName evidence="1">ATP:L-rhamnulose phosphotransferase</fullName>
    </alternativeName>
    <alternativeName>
        <fullName evidence="1">L-rhamnulose 1-kinase</fullName>
    </alternativeName>
    <alternativeName>
        <fullName evidence="1">Rhamnulose kinase</fullName>
    </alternativeName>
</protein>
<reference key="1">
    <citation type="journal article" date="2001" name="Nature">
        <title>Genome sequence of Yersinia pestis, the causative agent of plague.</title>
        <authorList>
            <person name="Parkhill J."/>
            <person name="Wren B.W."/>
            <person name="Thomson N.R."/>
            <person name="Titball R.W."/>
            <person name="Holden M.T.G."/>
            <person name="Prentice M.B."/>
            <person name="Sebaihia M."/>
            <person name="James K.D."/>
            <person name="Churcher C.M."/>
            <person name="Mungall K.L."/>
            <person name="Baker S."/>
            <person name="Basham D."/>
            <person name="Bentley S.D."/>
            <person name="Brooks K."/>
            <person name="Cerdeno-Tarraga A.-M."/>
            <person name="Chillingworth T."/>
            <person name="Cronin A."/>
            <person name="Davies R.M."/>
            <person name="Davis P."/>
            <person name="Dougan G."/>
            <person name="Feltwell T."/>
            <person name="Hamlin N."/>
            <person name="Holroyd S."/>
            <person name="Jagels K."/>
            <person name="Karlyshev A.V."/>
            <person name="Leather S."/>
            <person name="Moule S."/>
            <person name="Oyston P.C.F."/>
            <person name="Quail M.A."/>
            <person name="Rutherford K.M."/>
            <person name="Simmonds M."/>
            <person name="Skelton J."/>
            <person name="Stevens K."/>
            <person name="Whitehead S."/>
            <person name="Barrell B.G."/>
        </authorList>
    </citation>
    <scope>NUCLEOTIDE SEQUENCE [LARGE SCALE GENOMIC DNA]</scope>
    <source>
        <strain>CO-92 / Biovar Orientalis</strain>
    </source>
</reference>
<reference key="2">
    <citation type="journal article" date="2002" name="J. Bacteriol.">
        <title>Genome sequence of Yersinia pestis KIM.</title>
        <authorList>
            <person name="Deng W."/>
            <person name="Burland V."/>
            <person name="Plunkett G. III"/>
            <person name="Boutin A."/>
            <person name="Mayhew G.F."/>
            <person name="Liss P."/>
            <person name="Perna N.T."/>
            <person name="Rose D.J."/>
            <person name="Mau B."/>
            <person name="Zhou S."/>
            <person name="Schwartz D.C."/>
            <person name="Fetherston J.D."/>
            <person name="Lindler L.E."/>
            <person name="Brubaker R.R."/>
            <person name="Plano G.V."/>
            <person name="Straley S.C."/>
            <person name="McDonough K.A."/>
            <person name="Nilles M.L."/>
            <person name="Matson J.S."/>
            <person name="Blattner F.R."/>
            <person name="Perry R.D."/>
        </authorList>
    </citation>
    <scope>NUCLEOTIDE SEQUENCE [LARGE SCALE GENOMIC DNA]</scope>
    <source>
        <strain>KIM10+ / Biovar Mediaevalis</strain>
    </source>
</reference>
<reference key="3">
    <citation type="journal article" date="2004" name="DNA Res.">
        <title>Complete genome sequence of Yersinia pestis strain 91001, an isolate avirulent to humans.</title>
        <authorList>
            <person name="Song Y."/>
            <person name="Tong Z."/>
            <person name="Wang J."/>
            <person name="Wang L."/>
            <person name="Guo Z."/>
            <person name="Han Y."/>
            <person name="Zhang J."/>
            <person name="Pei D."/>
            <person name="Zhou D."/>
            <person name="Qin H."/>
            <person name="Pang X."/>
            <person name="Han Y."/>
            <person name="Zhai J."/>
            <person name="Li M."/>
            <person name="Cui B."/>
            <person name="Qi Z."/>
            <person name="Jin L."/>
            <person name="Dai R."/>
            <person name="Chen F."/>
            <person name="Li S."/>
            <person name="Ye C."/>
            <person name="Du Z."/>
            <person name="Lin W."/>
            <person name="Wang J."/>
            <person name="Yu J."/>
            <person name="Yang H."/>
            <person name="Wang J."/>
            <person name="Huang P."/>
            <person name="Yang R."/>
        </authorList>
    </citation>
    <scope>NUCLEOTIDE SEQUENCE [LARGE SCALE GENOMIC DNA]</scope>
    <source>
        <strain>91001 / Biovar Mediaevalis</strain>
    </source>
</reference>
<accession>Q8ZJ02</accession>
<accession>Q0WJX8</accession>
<accession>Q74XE7</accession>
<accession>Q7CKN8</accession>
<proteinExistence type="inferred from homology"/>
<dbReference type="EC" id="2.7.1.5" evidence="1"/>
<dbReference type="EMBL" id="AL590842">
    <property type="protein sequence ID" value="CAL19014.1"/>
    <property type="molecule type" value="Genomic_DNA"/>
</dbReference>
<dbReference type="EMBL" id="AE009952">
    <property type="protein sequence ID" value="AAM84175.1"/>
    <property type="molecule type" value="Genomic_DNA"/>
</dbReference>
<dbReference type="EMBL" id="AE017042">
    <property type="protein sequence ID" value="AAS60755.1"/>
    <property type="molecule type" value="Genomic_DNA"/>
</dbReference>
<dbReference type="PIR" id="AD0041">
    <property type="entry name" value="AD0041"/>
</dbReference>
<dbReference type="RefSeq" id="WP_002209105.1">
    <property type="nucleotide sequence ID" value="NZ_WUCM01000014.1"/>
</dbReference>
<dbReference type="RefSeq" id="YP_002345410.1">
    <property type="nucleotide sequence ID" value="NC_003143.1"/>
</dbReference>
<dbReference type="SMR" id="Q8ZJ02"/>
<dbReference type="IntAct" id="Q8ZJ02">
    <property type="interactions" value="3"/>
</dbReference>
<dbReference type="STRING" id="214092.YPO0330"/>
<dbReference type="PaxDb" id="214092-YPO0330"/>
<dbReference type="DNASU" id="1145534"/>
<dbReference type="EnsemblBacteria" id="AAS60755">
    <property type="protein sequence ID" value="AAS60755"/>
    <property type="gene ID" value="YP_0485"/>
</dbReference>
<dbReference type="GeneID" id="57974275"/>
<dbReference type="KEGG" id="ype:YPO0330"/>
<dbReference type="KEGG" id="ypk:y0587"/>
<dbReference type="KEGG" id="ypm:YP_0485"/>
<dbReference type="PATRIC" id="fig|214092.21.peg.567"/>
<dbReference type="eggNOG" id="COG1070">
    <property type="taxonomic scope" value="Bacteria"/>
</dbReference>
<dbReference type="HOGENOM" id="CLU_039395_0_0_6"/>
<dbReference type="OMA" id="HYRDART"/>
<dbReference type="OrthoDB" id="9761504at2"/>
<dbReference type="UniPathway" id="UPA00541">
    <property type="reaction ID" value="UER00602"/>
</dbReference>
<dbReference type="Proteomes" id="UP000000815">
    <property type="component" value="Chromosome"/>
</dbReference>
<dbReference type="Proteomes" id="UP000001019">
    <property type="component" value="Chromosome"/>
</dbReference>
<dbReference type="Proteomes" id="UP000002490">
    <property type="component" value="Chromosome"/>
</dbReference>
<dbReference type="GO" id="GO:0005829">
    <property type="term" value="C:cytosol"/>
    <property type="evidence" value="ECO:0000318"/>
    <property type="project" value="GO_Central"/>
</dbReference>
<dbReference type="GO" id="GO:0005524">
    <property type="term" value="F:ATP binding"/>
    <property type="evidence" value="ECO:0007669"/>
    <property type="project" value="UniProtKB-KW"/>
</dbReference>
<dbReference type="GO" id="GO:0004370">
    <property type="term" value="F:glycerol kinase activity"/>
    <property type="evidence" value="ECO:0000318"/>
    <property type="project" value="GO_Central"/>
</dbReference>
<dbReference type="GO" id="GO:0008993">
    <property type="term" value="F:rhamnulokinase activity"/>
    <property type="evidence" value="ECO:0007669"/>
    <property type="project" value="UniProtKB-UniRule"/>
</dbReference>
<dbReference type="GO" id="GO:0019301">
    <property type="term" value="P:rhamnose catabolic process"/>
    <property type="evidence" value="ECO:0000318"/>
    <property type="project" value="GO_Central"/>
</dbReference>
<dbReference type="CDD" id="cd07771">
    <property type="entry name" value="ASKHA_NBD_FGGY_RhaB-like"/>
    <property type="match status" value="1"/>
</dbReference>
<dbReference type="FunFam" id="3.30.420.40:FF:000064">
    <property type="entry name" value="Rhamnulokinase"/>
    <property type="match status" value="1"/>
</dbReference>
<dbReference type="FunFam" id="3.30.420.40:FF:000073">
    <property type="entry name" value="Rhamnulokinase"/>
    <property type="match status" value="1"/>
</dbReference>
<dbReference type="Gene3D" id="3.30.420.40">
    <property type="match status" value="2"/>
</dbReference>
<dbReference type="HAMAP" id="MF_01535">
    <property type="entry name" value="Rhamnulokinase"/>
    <property type="match status" value="1"/>
</dbReference>
<dbReference type="InterPro" id="IPR043129">
    <property type="entry name" value="ATPase_NBD"/>
</dbReference>
<dbReference type="InterPro" id="IPR000577">
    <property type="entry name" value="Carb_kinase_FGGY"/>
</dbReference>
<dbReference type="InterPro" id="IPR018485">
    <property type="entry name" value="FGGY_C"/>
</dbReference>
<dbReference type="InterPro" id="IPR018484">
    <property type="entry name" value="FGGY_N"/>
</dbReference>
<dbReference type="InterPro" id="IPR013449">
    <property type="entry name" value="Rhamnulokinase"/>
</dbReference>
<dbReference type="NCBIfam" id="NF007925">
    <property type="entry name" value="PRK10640.1"/>
    <property type="match status" value="1"/>
</dbReference>
<dbReference type="NCBIfam" id="TIGR02627">
    <property type="entry name" value="rhamnulo_kin"/>
    <property type="match status" value="1"/>
</dbReference>
<dbReference type="PANTHER" id="PTHR10196:SF93">
    <property type="entry name" value="L-RHAMNULOKINASE"/>
    <property type="match status" value="1"/>
</dbReference>
<dbReference type="PANTHER" id="PTHR10196">
    <property type="entry name" value="SUGAR KINASE"/>
    <property type="match status" value="1"/>
</dbReference>
<dbReference type="Pfam" id="PF02782">
    <property type="entry name" value="FGGY_C"/>
    <property type="match status" value="1"/>
</dbReference>
<dbReference type="Pfam" id="PF00370">
    <property type="entry name" value="FGGY_N"/>
    <property type="match status" value="1"/>
</dbReference>
<dbReference type="PIRSF" id="PIRSF000538">
    <property type="entry name" value="GlpK"/>
    <property type="match status" value="1"/>
</dbReference>
<dbReference type="SUPFAM" id="SSF53067">
    <property type="entry name" value="Actin-like ATPase domain"/>
    <property type="match status" value="2"/>
</dbReference>
<gene>
    <name evidence="1" type="primary">rhaB</name>
    <name type="ordered locus">YPO0330</name>
    <name type="ordered locus">y0587</name>
    <name type="ordered locus">YP_0485</name>
</gene>
<sequence length="485" mass="53424">MVAIDLGASSGRVMLASYYPGQQQLTLREVCRFTNQIKSIDGSDVWDIDAIEQSIREGLSQLDSEGIALDSIGIDSWGVDFVLLDKQGKRIGQPVSYRDSRTQGVMARAQQTLGSNAIYRRTGIQFLPFNTLYQLRALSEQQPHLLADVAHLLLIPDYLHYRLTGQLNWEYTNASTTQLLNIETGDWDSDLLAYAGVPAHWFAKPGKPGNTIGYWHSANGQQVPVVAVATHDTASAVLAAPLIDADAAYLSSGTWSLMGFESGTPLTHQQAQCSNITNEGGAEGRYRVLKNIMGLWLLQRATDELQIDDLPQLIEQAARQPACRSLINPNDSRFINPPNMCREIQNACREHQFPVPNTAAQLARCIFDSLAMLYRQVAQELATLRGRPISHLHIVGGGCQNQFLNQLCADACGLNVSMGPVEASTLGNIGSQLISLGEVADVTHYRRIVANNFPLHHLSPHDNSDFAAHWLQFQSLSQLPKELCI</sequence>
<name>RHAB_YERPE</name>
<feature type="chain" id="PRO_0000090547" description="Rhamnulokinase">
    <location>
        <begin position="1"/>
        <end position="485"/>
    </location>
</feature>
<feature type="active site" description="Proton acceptor" evidence="1">
    <location>
        <position position="232"/>
    </location>
</feature>
<feature type="binding site" evidence="1">
    <location>
        <begin position="8"/>
        <end position="12"/>
    </location>
    <ligand>
        <name>ATP</name>
        <dbReference type="ChEBI" id="CHEBI:30616"/>
    </ligand>
</feature>
<feature type="binding site" evidence="1">
    <location>
        <position position="78"/>
    </location>
    <ligand>
        <name>substrate</name>
    </ligand>
</feature>
<feature type="binding site" evidence="1">
    <location>
        <begin position="231"/>
        <end position="233"/>
    </location>
    <ligand>
        <name>substrate</name>
    </ligand>
</feature>
<feature type="binding site" evidence="1">
    <location>
        <position position="254"/>
    </location>
    <ligand>
        <name>ATP</name>
        <dbReference type="ChEBI" id="CHEBI:30616"/>
    </ligand>
</feature>
<feature type="binding site" evidence="1">
    <location>
        <position position="291"/>
    </location>
    <ligand>
        <name>substrate</name>
    </ligand>
</feature>
<feature type="binding site" evidence="1">
    <location>
        <position position="299"/>
    </location>
    <ligand>
        <name>ATP</name>
        <dbReference type="ChEBI" id="CHEBI:30616"/>
    </ligand>
</feature>
<feature type="binding site" evidence="1">
    <location>
        <position position="397"/>
    </location>
    <ligand>
        <name>ATP</name>
        <dbReference type="ChEBI" id="CHEBI:30616"/>
    </ligand>
</feature>
<feature type="disulfide bond" evidence="1">
    <location>
        <begin position="348"/>
        <end position="365"/>
    </location>
</feature>
<feature type="disulfide bond" evidence="1">
    <location>
        <begin position="408"/>
        <end position="412"/>
    </location>
</feature>